<feature type="chain" id="PRO_0000422372" description="Oxidoreductase NdmD">
    <location>
        <begin position="1"/>
        <end position="588"/>
    </location>
</feature>
<feature type="domain" description="Rieske" evidence="3">
    <location>
        <begin position="9"/>
        <end position="114"/>
    </location>
</feature>
<feature type="domain" description="FAD-binding FR-type" evidence="4">
    <location>
        <begin position="272"/>
        <end position="373"/>
    </location>
</feature>
<feature type="domain" description="2Fe-2S ferredoxin-type" evidence="2">
    <location>
        <begin position="503"/>
        <end position="588"/>
    </location>
</feature>
<feature type="binding site" evidence="1">
    <location>
        <position position="50"/>
    </location>
    <ligand>
        <name>[2Fe-2S] cluster</name>
        <dbReference type="ChEBI" id="CHEBI:190135"/>
    </ligand>
</feature>
<feature type="binding site" evidence="3">
    <location>
        <position position="52"/>
    </location>
    <ligand>
        <name>[2Fe-2S] cluster</name>
        <dbReference type="ChEBI" id="CHEBI:190135"/>
    </ligand>
</feature>
<feature type="binding site" evidence="1">
    <location>
        <position position="69"/>
    </location>
    <ligand>
        <name>[2Fe-2S] cluster</name>
        <dbReference type="ChEBI" id="CHEBI:190135"/>
    </ligand>
</feature>
<feature type="binding site" evidence="3">
    <location>
        <position position="72"/>
    </location>
    <ligand>
        <name>[2Fe-2S] cluster</name>
        <dbReference type="ChEBI" id="CHEBI:190135"/>
    </ligand>
</feature>
<feature type="binding site" evidence="1">
    <location>
        <position position="537"/>
    </location>
    <ligand>
        <name>[2Fe-2S] cluster</name>
        <dbReference type="ChEBI" id="CHEBI:190135"/>
    </ligand>
</feature>
<feature type="binding site" evidence="1">
    <location>
        <position position="542"/>
    </location>
    <ligand>
        <name>[2Fe-2S] cluster</name>
        <dbReference type="ChEBI" id="CHEBI:190135"/>
    </ligand>
</feature>
<feature type="binding site" evidence="1">
    <location>
        <position position="545"/>
    </location>
    <ligand>
        <name>[2Fe-2S] cluster</name>
        <dbReference type="ChEBI" id="CHEBI:190135"/>
    </ligand>
</feature>
<feature type="binding site" evidence="1">
    <location>
        <position position="575"/>
    </location>
    <ligand>
        <name>[2Fe-2S] cluster</name>
        <dbReference type="ChEBI" id="CHEBI:190135"/>
    </ligand>
</feature>
<feature type="strand" evidence="8">
    <location>
        <begin position="504"/>
        <end position="507"/>
    </location>
</feature>
<feature type="strand" evidence="8">
    <location>
        <begin position="514"/>
        <end position="516"/>
    </location>
</feature>
<feature type="helix" evidence="8">
    <location>
        <begin position="522"/>
        <end position="528"/>
    </location>
</feature>
<feature type="strand" evidence="8">
    <location>
        <begin position="536"/>
        <end position="539"/>
    </location>
</feature>
<feature type="strand" evidence="8">
    <location>
        <begin position="547"/>
        <end position="551"/>
    </location>
</feature>
<feature type="strand" evidence="8">
    <location>
        <begin position="559"/>
        <end position="561"/>
    </location>
</feature>
<feature type="helix" evidence="8">
    <location>
        <begin position="563"/>
        <end position="566"/>
    </location>
</feature>
<feature type="turn" evidence="8">
    <location>
        <begin position="567"/>
        <end position="569"/>
    </location>
</feature>
<feature type="strand" evidence="8">
    <location>
        <begin position="570"/>
        <end position="572"/>
    </location>
</feature>
<feature type="turn" evidence="8">
    <location>
        <begin position="574"/>
        <end position="576"/>
    </location>
</feature>
<feature type="strand" evidence="8">
    <location>
        <begin position="578"/>
        <end position="586"/>
    </location>
</feature>
<organism>
    <name type="scientific">Pseudomonas putida</name>
    <name type="common">Arthrobacter siderocapsulatus</name>
    <dbReference type="NCBI Taxonomy" id="303"/>
    <lineage>
        <taxon>Bacteria</taxon>
        <taxon>Pseudomonadati</taxon>
        <taxon>Pseudomonadota</taxon>
        <taxon>Gammaproteobacteria</taxon>
        <taxon>Pseudomonadales</taxon>
        <taxon>Pseudomonadaceae</taxon>
        <taxon>Pseudomonas</taxon>
    </lineage>
</organism>
<proteinExistence type="evidence at protein level"/>
<protein>
    <recommendedName>
        <fullName>Oxidoreductase NdmD</fullName>
        <ecNumber>1.-.-.-</ecNumber>
    </recommendedName>
</protein>
<comment type="function">
    <text evidence="5 6">Involved in the caffeine degradation, which is the essential first step for assimilating the carbon and nitrogen in caffeine. Catalyzes the oxidation of NADH and transfers electrons to NdmA and NdmB, which catalyze the N-demethylation reactions.</text>
</comment>
<comment type="cofactor">
    <cofactor evidence="3 6">
        <name>[2Fe-2S] cluster</name>
        <dbReference type="ChEBI" id="CHEBI:190135"/>
    </cofactor>
    <text evidence="3 6">Binds 1 [2Fe-2S] cluster per subunit.</text>
</comment>
<comment type="miscellaneous">
    <text evidence="7">It is probably a fusion between a ferredoxin and a reductase into a single ORF which encodes a functional reductase that is specifically coupled to NdmA and NdmB.</text>
</comment>
<name>NDMD_PSEPU</name>
<sequence length="588" mass="65089">MNKLDVNQWFPIATTEDLPKRHVFHATLLGQEMAIWRDDSGSVNAWENRCPHRGLRLTLGANTGNELRCQYHGWTYESGTGGCTFVPAHRDAPPPNAARVNTFPVREKHGFIWTTLGQPPGEPISILDDAQLVNAVKTNLHSVVIDADIDGVVSVLRQNLSAFIDVFGAASAEDLHLKSMLQDRGILVTRSGSIAIHFYMQRSTISKCVVHAQVLTPGRPGYELQKNYSYAMNVIRRAAEAVATDLISITDISDQTIEKLEVVRENMTKAPPTHYICEVVTRTQETGDINSYWLKPIGYPLPAFSPGMHISITTPEGSIRQYSLVNGPDERESFIIGVKKEIQSRGGSRSMHEDVKVGTQLKVTLPRNGFPLVQTRKHPILVAGGIGITPILCMAQALDQQGSSYEIHYFARAFEHVPFQDRLTALGDRLNVHLGLGPDETRAKLPDIMEIHNAQDVDVYTCGPQPMIETVSAVALAHGIAEESIRFEFFSKKNDVPVSDEEYEVELKKTGQIFTVSPGSTLLQACLDNDVRIEASCEQGVCGTCITPVVSGDLEHHDTYLSKKERESGKWIMPCVSRCKSKKIVLDL</sequence>
<reference key="1">
    <citation type="journal article" date="2012" name="J. Bacteriol.">
        <title>Novel, highly specific N-demethylases enable bacteria to live on caffeine and related purine alkaloids.</title>
        <authorList>
            <person name="Summers R.M."/>
            <person name="Louie T.M."/>
            <person name="Yu C.L."/>
            <person name="Gakhar L."/>
            <person name="Louie K.C."/>
            <person name="Subramanian M."/>
        </authorList>
    </citation>
    <scope>NUCLEOTIDE SEQUENCE [GENOMIC DNA]</scope>
    <scope>FUNCTION</scope>
    <scope>COFACTOR</scope>
    <source>
        <strain>CBB5</strain>
    </source>
</reference>
<reference key="2">
    <citation type="journal article" date="2011" name="Microbiology">
        <title>Characterization of a broad-specificity non-haem iron N-demethylase from Pseudomonas putida CBB5 capable of utilizing several purine alkaloids as sole carbon and nitrogen source.</title>
        <authorList>
            <person name="Summers R.M."/>
            <person name="Louie T.M."/>
            <person name="Yu C.L."/>
            <person name="Subramanian M."/>
        </authorList>
    </citation>
    <scope>FUNCTION</scope>
    <source>
        <strain>CBB5</strain>
    </source>
</reference>
<accession>H9N291</accession>
<keyword id="KW-0001">2Fe-2S</keyword>
<keyword id="KW-0002">3D-structure</keyword>
<keyword id="KW-0017">Alkaloid metabolism</keyword>
<keyword id="KW-0285">Flavoprotein</keyword>
<keyword id="KW-0408">Iron</keyword>
<keyword id="KW-0411">Iron-sulfur</keyword>
<keyword id="KW-0479">Metal-binding</keyword>
<keyword id="KW-0560">Oxidoreductase</keyword>
<dbReference type="EC" id="1.-.-.-"/>
<dbReference type="EMBL" id="JQ061130">
    <property type="protein sequence ID" value="AFD03119.1"/>
    <property type="molecule type" value="Genomic_DNA"/>
</dbReference>
<dbReference type="PDB" id="6ICM">
    <property type="method" value="X-ray"/>
    <property type="resolution" value="2.96 A"/>
    <property type="chains" value="D=502-588"/>
</dbReference>
<dbReference type="PDBsum" id="6ICM"/>
<dbReference type="SMR" id="H9N291"/>
<dbReference type="BioCyc" id="MetaCyc:MONOMER-17177"/>
<dbReference type="GO" id="GO:0051537">
    <property type="term" value="F:2 iron, 2 sulfur cluster binding"/>
    <property type="evidence" value="ECO:0000314"/>
    <property type="project" value="UniProtKB"/>
</dbReference>
<dbReference type="GO" id="GO:0046872">
    <property type="term" value="F:metal ion binding"/>
    <property type="evidence" value="ECO:0007669"/>
    <property type="project" value="UniProtKB-KW"/>
</dbReference>
<dbReference type="GO" id="GO:0016491">
    <property type="term" value="F:oxidoreductase activity"/>
    <property type="evidence" value="ECO:0007669"/>
    <property type="project" value="UniProtKB-KW"/>
</dbReference>
<dbReference type="GO" id="GO:0009822">
    <property type="term" value="P:alkaloid catabolic process"/>
    <property type="evidence" value="ECO:0000314"/>
    <property type="project" value="UniProtKB"/>
</dbReference>
<dbReference type="CDD" id="cd00207">
    <property type="entry name" value="fer2"/>
    <property type="match status" value="1"/>
</dbReference>
<dbReference type="CDD" id="cd06185">
    <property type="entry name" value="PDR_like"/>
    <property type="match status" value="1"/>
</dbReference>
<dbReference type="CDD" id="cd03469">
    <property type="entry name" value="Rieske_RO_Alpha_N"/>
    <property type="match status" value="1"/>
</dbReference>
<dbReference type="Gene3D" id="3.10.20.30">
    <property type="match status" value="1"/>
</dbReference>
<dbReference type="Gene3D" id="3.40.50.80">
    <property type="entry name" value="Nucleotide-binding domain of ferredoxin-NADP reductase (FNR) module"/>
    <property type="match status" value="1"/>
</dbReference>
<dbReference type="Gene3D" id="2.102.10.10">
    <property type="entry name" value="Rieske [2Fe-2S] iron-sulphur domain"/>
    <property type="match status" value="1"/>
</dbReference>
<dbReference type="Gene3D" id="2.40.30.10">
    <property type="entry name" value="Translation factors"/>
    <property type="match status" value="1"/>
</dbReference>
<dbReference type="InterPro" id="IPR036010">
    <property type="entry name" value="2Fe-2S_ferredoxin-like_sf"/>
</dbReference>
<dbReference type="InterPro" id="IPR001041">
    <property type="entry name" value="2Fe-2S_ferredoxin-type"/>
</dbReference>
<dbReference type="InterPro" id="IPR006058">
    <property type="entry name" value="2Fe2S_fd_BS"/>
</dbReference>
<dbReference type="InterPro" id="IPR012675">
    <property type="entry name" value="Beta-grasp_dom_sf"/>
</dbReference>
<dbReference type="InterPro" id="IPR017927">
    <property type="entry name" value="FAD-bd_FR_type"/>
</dbReference>
<dbReference type="InterPro" id="IPR039261">
    <property type="entry name" value="FNR_nucleotide-bd"/>
</dbReference>
<dbReference type="InterPro" id="IPR050415">
    <property type="entry name" value="MRET"/>
</dbReference>
<dbReference type="InterPro" id="IPR017938">
    <property type="entry name" value="Riboflavin_synthase-like_b-brl"/>
</dbReference>
<dbReference type="InterPro" id="IPR017941">
    <property type="entry name" value="Rieske_2Fe-2S"/>
</dbReference>
<dbReference type="InterPro" id="IPR036922">
    <property type="entry name" value="Rieske_2Fe-2S_sf"/>
</dbReference>
<dbReference type="PANTHER" id="PTHR47354:SF1">
    <property type="entry name" value="CARNITINE MONOOXYGENASE REDUCTASE SUBUNIT"/>
    <property type="match status" value="1"/>
</dbReference>
<dbReference type="PANTHER" id="PTHR47354">
    <property type="entry name" value="NADH OXIDOREDUCTASE HCR"/>
    <property type="match status" value="1"/>
</dbReference>
<dbReference type="Pfam" id="PF00111">
    <property type="entry name" value="Fer2"/>
    <property type="match status" value="1"/>
</dbReference>
<dbReference type="Pfam" id="PF00355">
    <property type="entry name" value="Rieske"/>
    <property type="match status" value="1"/>
</dbReference>
<dbReference type="PRINTS" id="PR00409">
    <property type="entry name" value="PHDIOXRDTASE"/>
</dbReference>
<dbReference type="SUPFAM" id="SSF54292">
    <property type="entry name" value="2Fe-2S ferredoxin-like"/>
    <property type="match status" value="1"/>
</dbReference>
<dbReference type="SUPFAM" id="SSF52343">
    <property type="entry name" value="Ferredoxin reductase-like, C-terminal NADP-linked domain"/>
    <property type="match status" value="1"/>
</dbReference>
<dbReference type="SUPFAM" id="SSF50022">
    <property type="entry name" value="ISP domain"/>
    <property type="match status" value="1"/>
</dbReference>
<dbReference type="SUPFAM" id="SSF63380">
    <property type="entry name" value="Riboflavin synthase domain-like"/>
    <property type="match status" value="1"/>
</dbReference>
<dbReference type="PROSITE" id="PS00197">
    <property type="entry name" value="2FE2S_FER_1"/>
    <property type="match status" value="1"/>
</dbReference>
<dbReference type="PROSITE" id="PS51085">
    <property type="entry name" value="2FE2S_FER_2"/>
    <property type="match status" value="1"/>
</dbReference>
<dbReference type="PROSITE" id="PS51384">
    <property type="entry name" value="FAD_FR"/>
    <property type="match status" value="1"/>
</dbReference>
<dbReference type="PROSITE" id="PS51296">
    <property type="entry name" value="RIESKE"/>
    <property type="match status" value="1"/>
</dbReference>
<evidence type="ECO:0000250" key="1"/>
<evidence type="ECO:0000255" key="2">
    <source>
        <dbReference type="PROSITE-ProRule" id="PRU00465"/>
    </source>
</evidence>
<evidence type="ECO:0000255" key="3">
    <source>
        <dbReference type="PROSITE-ProRule" id="PRU00628"/>
    </source>
</evidence>
<evidence type="ECO:0000255" key="4">
    <source>
        <dbReference type="PROSITE-ProRule" id="PRU00716"/>
    </source>
</evidence>
<evidence type="ECO:0000269" key="5">
    <source>
    </source>
</evidence>
<evidence type="ECO:0000269" key="6">
    <source>
    </source>
</evidence>
<evidence type="ECO:0000305" key="7">
    <source>
    </source>
</evidence>
<evidence type="ECO:0007829" key="8">
    <source>
        <dbReference type="PDB" id="6ICM"/>
    </source>
</evidence>
<gene>
    <name type="primary">ndmD</name>
</gene>